<organism>
    <name type="scientific">Salmonella typhimurium (strain LT2 / SGSC1412 / ATCC 700720)</name>
    <dbReference type="NCBI Taxonomy" id="99287"/>
    <lineage>
        <taxon>Bacteria</taxon>
        <taxon>Pseudomonadati</taxon>
        <taxon>Pseudomonadota</taxon>
        <taxon>Gammaproteobacteria</taxon>
        <taxon>Enterobacterales</taxon>
        <taxon>Enterobacteriaceae</taxon>
        <taxon>Salmonella</taxon>
    </lineage>
</organism>
<dbReference type="EC" id="1.3.98.3" evidence="1"/>
<dbReference type="EMBL" id="U06779">
    <property type="protein sequence ID" value="AAA19690.1"/>
    <property type="molecule type" value="Genomic_DNA"/>
</dbReference>
<dbReference type="EMBL" id="AE006468">
    <property type="protein sequence ID" value="AAL22843.1"/>
    <property type="molecule type" value="Genomic_DNA"/>
</dbReference>
<dbReference type="RefSeq" id="NP_462884.1">
    <property type="nucleotide sequence ID" value="NC_003197.2"/>
</dbReference>
<dbReference type="RefSeq" id="WP_000003520.1">
    <property type="nucleotide sequence ID" value="NC_003197.2"/>
</dbReference>
<dbReference type="SMR" id="P0A1E1"/>
<dbReference type="STRING" id="99287.STM4004"/>
<dbReference type="PaxDb" id="99287-STM4004"/>
<dbReference type="GeneID" id="1255530"/>
<dbReference type="KEGG" id="stm:STM4004"/>
<dbReference type="PATRIC" id="fig|99287.12.peg.4219"/>
<dbReference type="HOGENOM" id="CLU_027579_3_0_6"/>
<dbReference type="OMA" id="NYAHVPW"/>
<dbReference type="PhylomeDB" id="P0A1E1"/>
<dbReference type="BioCyc" id="SENT99287:STM4004-MONOMER"/>
<dbReference type="UniPathway" id="UPA00251">
    <property type="reaction ID" value="UER00323"/>
</dbReference>
<dbReference type="Proteomes" id="UP000001014">
    <property type="component" value="Chromosome"/>
</dbReference>
<dbReference type="GO" id="GO:0005737">
    <property type="term" value="C:cytoplasm"/>
    <property type="evidence" value="ECO:0000250"/>
    <property type="project" value="UniProtKB"/>
</dbReference>
<dbReference type="GO" id="GO:0051539">
    <property type="term" value="F:4 iron, 4 sulfur cluster binding"/>
    <property type="evidence" value="ECO:0000250"/>
    <property type="project" value="UniProtKB"/>
</dbReference>
<dbReference type="GO" id="GO:0051989">
    <property type="term" value="F:coproporphyrinogen dehydrogenase activity"/>
    <property type="evidence" value="ECO:0000315"/>
    <property type="project" value="UniProtKB"/>
</dbReference>
<dbReference type="GO" id="GO:0004109">
    <property type="term" value="F:coproporphyrinogen oxidase activity"/>
    <property type="evidence" value="ECO:0007669"/>
    <property type="project" value="InterPro"/>
</dbReference>
<dbReference type="GO" id="GO:0046872">
    <property type="term" value="F:metal ion binding"/>
    <property type="evidence" value="ECO:0007669"/>
    <property type="project" value="UniProtKB-KW"/>
</dbReference>
<dbReference type="GO" id="GO:0006779">
    <property type="term" value="P:porphyrin-containing compound biosynthetic process"/>
    <property type="evidence" value="ECO:0000315"/>
    <property type="project" value="UniProtKB"/>
</dbReference>
<dbReference type="GO" id="GO:0006782">
    <property type="term" value="P:protoporphyrinogen IX biosynthetic process"/>
    <property type="evidence" value="ECO:0000315"/>
    <property type="project" value="UniProtKB"/>
</dbReference>
<dbReference type="CDD" id="cd01335">
    <property type="entry name" value="Radical_SAM"/>
    <property type="match status" value="1"/>
</dbReference>
<dbReference type="FunFam" id="1.10.10.920:FF:000001">
    <property type="entry name" value="Coproporphyrinogen-III oxidase"/>
    <property type="match status" value="1"/>
</dbReference>
<dbReference type="FunFam" id="3.20.20.70:FF:000077">
    <property type="entry name" value="Coproporphyrinogen-III oxidase"/>
    <property type="match status" value="1"/>
</dbReference>
<dbReference type="FunFam" id="3.80.30.20:FF:000012">
    <property type="entry name" value="Coproporphyrinogen-III oxidase"/>
    <property type="match status" value="1"/>
</dbReference>
<dbReference type="Gene3D" id="1.10.10.920">
    <property type="match status" value="1"/>
</dbReference>
<dbReference type="Gene3D" id="3.20.20.70">
    <property type="entry name" value="Aldolase class I"/>
    <property type="match status" value="1"/>
</dbReference>
<dbReference type="InterPro" id="IPR013785">
    <property type="entry name" value="Aldolase_TIM"/>
</dbReference>
<dbReference type="InterPro" id="IPR004558">
    <property type="entry name" value="Coprogen_oxidase_HemN"/>
</dbReference>
<dbReference type="InterPro" id="IPR034505">
    <property type="entry name" value="Coproporphyrinogen-III_oxidase"/>
</dbReference>
<dbReference type="InterPro" id="IPR006638">
    <property type="entry name" value="Elp3/MiaA/NifB-like_rSAM"/>
</dbReference>
<dbReference type="InterPro" id="IPR010723">
    <property type="entry name" value="HemN_C"/>
</dbReference>
<dbReference type="InterPro" id="IPR007197">
    <property type="entry name" value="rSAM"/>
</dbReference>
<dbReference type="NCBIfam" id="TIGR00538">
    <property type="entry name" value="hemN"/>
    <property type="match status" value="1"/>
</dbReference>
<dbReference type="PANTHER" id="PTHR13932">
    <property type="entry name" value="COPROPORPHYRINIGEN III OXIDASE"/>
    <property type="match status" value="1"/>
</dbReference>
<dbReference type="PANTHER" id="PTHR13932:SF6">
    <property type="entry name" value="OXYGEN-INDEPENDENT COPROPORPHYRINOGEN III OXIDASE"/>
    <property type="match status" value="1"/>
</dbReference>
<dbReference type="Pfam" id="PF06969">
    <property type="entry name" value="HemN_C"/>
    <property type="match status" value="1"/>
</dbReference>
<dbReference type="Pfam" id="PF04055">
    <property type="entry name" value="Radical_SAM"/>
    <property type="match status" value="1"/>
</dbReference>
<dbReference type="PIRSF" id="PIRSF000167">
    <property type="entry name" value="HemN"/>
    <property type="match status" value="1"/>
</dbReference>
<dbReference type="SFLD" id="SFLDG01065">
    <property type="entry name" value="anaerobic_coproporphyrinogen-I"/>
    <property type="match status" value="1"/>
</dbReference>
<dbReference type="SFLD" id="SFLDG01082">
    <property type="entry name" value="B12-binding_domain_containing"/>
    <property type="match status" value="1"/>
</dbReference>
<dbReference type="SFLD" id="SFLDF00277">
    <property type="entry name" value="oxygen-independent_coproporphy"/>
    <property type="match status" value="1"/>
</dbReference>
<dbReference type="SMART" id="SM00729">
    <property type="entry name" value="Elp3"/>
    <property type="match status" value="1"/>
</dbReference>
<dbReference type="SUPFAM" id="SSF102114">
    <property type="entry name" value="Radical SAM enzymes"/>
    <property type="match status" value="1"/>
</dbReference>
<dbReference type="PROSITE" id="PS51918">
    <property type="entry name" value="RADICAL_SAM"/>
    <property type="match status" value="1"/>
</dbReference>
<name>HEMN_SALTY</name>
<comment type="function">
    <text evidence="3">Involved in the heme biosynthesis. Catalyzes the anaerobic oxidative decarboxylation of propionate groups of rings A and B of coproporphyrinogen III to yield the vinyl groups in protoporphyrinogen IX.</text>
</comment>
<comment type="catalytic activity">
    <reaction evidence="1">
        <text>coproporphyrinogen III + 2 S-adenosyl-L-methionine = protoporphyrinogen IX + 2 5'-deoxyadenosine + 2 L-methionine + 2 CO2</text>
        <dbReference type="Rhea" id="RHEA:15425"/>
        <dbReference type="ChEBI" id="CHEBI:16526"/>
        <dbReference type="ChEBI" id="CHEBI:17319"/>
        <dbReference type="ChEBI" id="CHEBI:57307"/>
        <dbReference type="ChEBI" id="CHEBI:57309"/>
        <dbReference type="ChEBI" id="CHEBI:57844"/>
        <dbReference type="ChEBI" id="CHEBI:59789"/>
        <dbReference type="EC" id="1.3.98.3"/>
    </reaction>
</comment>
<comment type="cofactor">
    <cofactor evidence="1">
        <name>[4Fe-4S] cluster</name>
        <dbReference type="ChEBI" id="CHEBI:49883"/>
    </cofactor>
    <text evidence="1">Binds 1 [4Fe-4S] cluster. The cluster is coordinated with 3 cysteines and an exchangeable S-adenosyl-L-methionine.</text>
</comment>
<comment type="pathway">
    <text>Porphyrin-containing compound metabolism; protoporphyrin-IX biosynthesis; protoporphyrinogen-IX from coproporphyrinogen-III (AdoMet route): step 1/1.</text>
</comment>
<comment type="subunit">
    <text evidence="1">Monomer.</text>
</comment>
<comment type="subcellular location">
    <subcellularLocation>
        <location evidence="1">Cytoplasm</location>
    </subcellularLocation>
</comment>
<comment type="disruption phenotype">
    <text evidence="3">Cells lacking this gene accumulate coproporphyrinogen III under anaerobic conditions.</text>
</comment>
<comment type="similarity">
    <text evidence="4">Belongs to the anaerobic coproporphyrinogen-III oxidase family.</text>
</comment>
<feature type="chain" id="PRO_0000109952" description="Oxygen-independent coproporphyrinogen III oxidase">
    <location>
        <begin position="1"/>
        <end position="457"/>
    </location>
</feature>
<feature type="domain" description="Radical SAM core" evidence="2">
    <location>
        <begin position="47"/>
        <end position="280"/>
    </location>
</feature>
<feature type="binding site" evidence="1">
    <location>
        <position position="56"/>
    </location>
    <ligand>
        <name>S-adenosyl-L-methionine</name>
        <dbReference type="ChEBI" id="CHEBI:59789"/>
        <label>1</label>
    </ligand>
</feature>
<feature type="binding site" evidence="1">
    <location>
        <position position="62"/>
    </location>
    <ligand>
        <name>[4Fe-4S] cluster</name>
        <dbReference type="ChEBI" id="CHEBI:49883"/>
        <note>4Fe-4S-S-AdoMet</note>
    </ligand>
</feature>
<feature type="binding site" evidence="1">
    <location>
        <position position="66"/>
    </location>
    <ligand>
        <name>[4Fe-4S] cluster</name>
        <dbReference type="ChEBI" id="CHEBI:49883"/>
        <note>4Fe-4S-S-AdoMet</note>
    </ligand>
</feature>
<feature type="binding site" evidence="1">
    <location>
        <position position="68"/>
    </location>
    <ligand>
        <name>S-adenosyl-L-methionine</name>
        <dbReference type="ChEBI" id="CHEBI:59789"/>
        <label>2</label>
    </ligand>
</feature>
<feature type="binding site" evidence="1">
    <location>
        <position position="69"/>
    </location>
    <ligand>
        <name>[4Fe-4S] cluster</name>
        <dbReference type="ChEBI" id="CHEBI:49883"/>
        <note>4Fe-4S-S-AdoMet</note>
    </ligand>
</feature>
<feature type="binding site" evidence="1">
    <location>
        <position position="112"/>
    </location>
    <ligand>
        <name>S-adenosyl-L-methionine</name>
        <dbReference type="ChEBI" id="CHEBI:59789"/>
        <label>1</label>
    </ligand>
</feature>
<feature type="binding site" evidence="1">
    <location>
        <begin position="113"/>
        <end position="114"/>
    </location>
    <ligand>
        <name>S-adenosyl-L-methionine</name>
        <dbReference type="ChEBI" id="CHEBI:59789"/>
        <label>2</label>
    </ligand>
</feature>
<feature type="binding site" evidence="1">
    <location>
        <position position="145"/>
    </location>
    <ligand>
        <name>S-adenosyl-L-methionine</name>
        <dbReference type="ChEBI" id="CHEBI:59789"/>
        <label>1</label>
    </ligand>
</feature>
<feature type="binding site" evidence="1">
    <location>
        <position position="172"/>
    </location>
    <ligand>
        <name>S-adenosyl-L-methionine</name>
        <dbReference type="ChEBI" id="CHEBI:59789"/>
        <label>2</label>
    </ligand>
</feature>
<feature type="binding site" evidence="1">
    <location>
        <position position="184"/>
    </location>
    <ligand>
        <name>S-adenosyl-L-methionine</name>
        <dbReference type="ChEBI" id="CHEBI:59789"/>
        <label>2</label>
    </ligand>
</feature>
<feature type="binding site" evidence="1">
    <location>
        <position position="209"/>
    </location>
    <ligand>
        <name>S-adenosyl-L-methionine</name>
        <dbReference type="ChEBI" id="CHEBI:59789"/>
        <label>2</label>
    </ligand>
</feature>
<feature type="binding site" evidence="1">
    <location>
        <position position="243"/>
    </location>
    <ligand>
        <name>S-adenosyl-L-methionine</name>
        <dbReference type="ChEBI" id="CHEBI:59789"/>
        <label>2</label>
    </ligand>
</feature>
<feature type="binding site" evidence="1">
    <location>
        <position position="329"/>
    </location>
    <ligand>
        <name>S-adenosyl-L-methionine</name>
        <dbReference type="ChEBI" id="CHEBI:59789"/>
        <label>1</label>
    </ligand>
</feature>
<gene>
    <name type="primary">hemN</name>
    <name type="ordered locus">STM4004</name>
</gene>
<proteinExistence type="inferred from homology"/>
<protein>
    <recommendedName>
        <fullName>Oxygen-independent coproporphyrinogen III oxidase</fullName>
        <shortName>CPO</shortName>
        <ecNumber evidence="1">1.3.98.3</ecNumber>
    </recommendedName>
    <alternativeName>
        <fullName>Coproporphyrinogen III dehydrogenase</fullName>
        <shortName>CPDH</shortName>
    </alternativeName>
</protein>
<accession>P0A1E1</accession>
<accession>P37129</accession>
<reference key="1">
    <citation type="journal article" date="1994" name="J. Bacteriol.">
        <title>Cloning, DNA sequence, and complementation analysis of the Salmonella typhimurium hemN gene encoding a putative oxygen-independent coproporphyrinogen III oxidase.</title>
        <authorList>
            <person name="Xu K."/>
            <person name="Elliott T."/>
        </authorList>
    </citation>
    <scope>NUCLEOTIDE SEQUENCE [GENOMIC DNA]</scope>
    <scope>FUNCTION</scope>
    <scope>DISRUPTION PHENOTYPE</scope>
    <source>
        <strain>LT2 / SGSC1412 / ATCC 700720</strain>
    </source>
</reference>
<reference key="2">
    <citation type="journal article" date="2001" name="Nature">
        <title>Complete genome sequence of Salmonella enterica serovar Typhimurium LT2.</title>
        <authorList>
            <person name="McClelland M."/>
            <person name="Sanderson K.E."/>
            <person name="Spieth J."/>
            <person name="Clifton S.W."/>
            <person name="Latreille P."/>
            <person name="Courtney L."/>
            <person name="Porwollik S."/>
            <person name="Ali J."/>
            <person name="Dante M."/>
            <person name="Du F."/>
            <person name="Hou S."/>
            <person name="Layman D."/>
            <person name="Leonard S."/>
            <person name="Nguyen C."/>
            <person name="Scott K."/>
            <person name="Holmes A."/>
            <person name="Grewal N."/>
            <person name="Mulvaney E."/>
            <person name="Ryan E."/>
            <person name="Sun H."/>
            <person name="Florea L."/>
            <person name="Miller W."/>
            <person name="Stoneking T."/>
            <person name="Nhan M."/>
            <person name="Waterston R."/>
            <person name="Wilson R.K."/>
        </authorList>
    </citation>
    <scope>NUCLEOTIDE SEQUENCE [LARGE SCALE GENOMIC DNA]</scope>
    <source>
        <strain>LT2 / SGSC1412 / ATCC 700720</strain>
    </source>
</reference>
<evidence type="ECO:0000250" key="1">
    <source>
        <dbReference type="UniProtKB" id="P32131"/>
    </source>
</evidence>
<evidence type="ECO:0000255" key="2">
    <source>
        <dbReference type="PROSITE-ProRule" id="PRU01266"/>
    </source>
</evidence>
<evidence type="ECO:0000269" key="3">
    <source>
    </source>
</evidence>
<evidence type="ECO:0000305" key="4"/>
<keyword id="KW-0004">4Fe-4S</keyword>
<keyword id="KW-0963">Cytoplasm</keyword>
<keyword id="KW-0408">Iron</keyword>
<keyword id="KW-0411">Iron-sulfur</keyword>
<keyword id="KW-0479">Metal-binding</keyword>
<keyword id="KW-0560">Oxidoreductase</keyword>
<keyword id="KW-0627">Porphyrin biosynthesis</keyword>
<keyword id="KW-1185">Reference proteome</keyword>
<keyword id="KW-0949">S-adenosyl-L-methionine</keyword>
<sequence length="457" mass="52828">MSEQQIDWDLALIQKYNYSGPRYTSYPTALEFSEDFEDAAFLQAVARYPERPLSLYVHIPFCHKLCYFCGCNKIVTRQQHKADQYLDALEQEIRHRAPLFADRHVSQLHWGGGTPTYLNKAQISRLMTLLRENFHFNTDAEISIEVDPREIELDVLDHLRAEGFNRLSMGVQDFNKEVQRLVNREQDEEFIFALLNHARDIGFTSTNIDLIYGLPKQTPESFAFTLKRVTELNPDRLSVFNYAHLPTLFAAQRKIKDADLPSAQQKLDILQETIVSLTQAGYQFIGMDHFARPDDELAVAQREGVLHRNFQGYTTQGDTDLLGMGVSAISMIGDGYMQNQKELKRYYQQVDERGNALWRGITLTRDDCIRRDVIKALICNFRLDFNAVEQQWGLHFAEYFAEDLQLLSPLAKDGLVDISEKGIQVTAKGRLLIRNICMCFDAYLRQKARMQQFSRVI</sequence>